<reference key="1">
    <citation type="journal article" date="2002" name="Microbiol. Res.">
        <title>Structural features of the glycogen branching enzyme encoding genes from aspergilli.</title>
        <authorList>
            <person name="Sasangka P."/>
            <person name="Matsuno A."/>
            <person name="Tanaka A."/>
            <person name="Akasaka Y."/>
            <person name="Suyama S."/>
            <person name="Kano S."/>
            <person name="Miyazaki M."/>
            <person name="Akao T."/>
            <person name="Kato M."/>
            <person name="Kobayashi T."/>
            <person name="Tsukagoshi N."/>
        </authorList>
    </citation>
    <scope>NUCLEOTIDE SEQUENCE [MRNA]</scope>
    <source>
        <strain>ATCC 42149 / RIB 40</strain>
    </source>
</reference>
<reference key="2">
    <citation type="journal article" date="2005" name="Nature">
        <title>Genome sequencing and analysis of Aspergillus oryzae.</title>
        <authorList>
            <person name="Machida M."/>
            <person name="Asai K."/>
            <person name="Sano M."/>
            <person name="Tanaka T."/>
            <person name="Kumagai T."/>
            <person name="Terai G."/>
            <person name="Kusumoto K."/>
            <person name="Arima T."/>
            <person name="Akita O."/>
            <person name="Kashiwagi Y."/>
            <person name="Abe K."/>
            <person name="Gomi K."/>
            <person name="Horiuchi H."/>
            <person name="Kitamoto K."/>
            <person name="Kobayashi T."/>
            <person name="Takeuchi M."/>
            <person name="Denning D.W."/>
            <person name="Galagan J.E."/>
            <person name="Nierman W.C."/>
            <person name="Yu J."/>
            <person name="Archer D.B."/>
            <person name="Bennett J.W."/>
            <person name="Bhatnagar D."/>
            <person name="Cleveland T.E."/>
            <person name="Fedorova N.D."/>
            <person name="Gotoh O."/>
            <person name="Horikawa H."/>
            <person name="Hosoyama A."/>
            <person name="Ichinomiya M."/>
            <person name="Igarashi R."/>
            <person name="Iwashita K."/>
            <person name="Juvvadi P.R."/>
            <person name="Kato M."/>
            <person name="Kato Y."/>
            <person name="Kin T."/>
            <person name="Kokubun A."/>
            <person name="Maeda H."/>
            <person name="Maeyama N."/>
            <person name="Maruyama J."/>
            <person name="Nagasaki H."/>
            <person name="Nakajima T."/>
            <person name="Oda K."/>
            <person name="Okada K."/>
            <person name="Paulsen I."/>
            <person name="Sakamoto K."/>
            <person name="Sawano T."/>
            <person name="Takahashi M."/>
            <person name="Takase K."/>
            <person name="Terabayashi Y."/>
            <person name="Wortman J.R."/>
            <person name="Yamada O."/>
            <person name="Yamagata Y."/>
            <person name="Anazawa H."/>
            <person name="Hata Y."/>
            <person name="Koide Y."/>
            <person name="Komori T."/>
            <person name="Koyama Y."/>
            <person name="Minetoki T."/>
            <person name="Suharnan S."/>
            <person name="Tanaka A."/>
            <person name="Isono K."/>
            <person name="Kuhara S."/>
            <person name="Ogasawara N."/>
            <person name="Kikuchi H."/>
        </authorList>
    </citation>
    <scope>NUCLEOTIDE SEQUENCE [LARGE SCALE GENOMIC DNA]</scope>
    <source>
        <strain>ATCC 42149 / RIB 40</strain>
    </source>
</reference>
<gene>
    <name type="primary">gbeA</name>
    <name type="ORF">AO090010000483</name>
</gene>
<comment type="function">
    <text evidence="2">Glycogen-branching enzyme participates in the glycogen biosynthetic process along with glycogenin and glycogen synthase. Generates alpha-1,6-glucosidic branches from alpha-1,4-linked glucose chains, to increase solubility of the glycogen polymer.</text>
</comment>
<comment type="catalytic activity">
    <reaction evidence="2">
        <text>Transfers a segment of a (1-&gt;4)-alpha-D-glucan chain to a primary hydroxy group in a similar glucan chain.</text>
        <dbReference type="EC" id="2.4.1.18"/>
    </reaction>
</comment>
<comment type="pathway">
    <text evidence="2">Glycan biosynthesis; glycogen biosynthesis.</text>
</comment>
<comment type="subcellular location">
    <subcellularLocation>
        <location evidence="1">Cytoplasm</location>
    </subcellularLocation>
    <text evidence="1">Localizes to glycogen granules in the cytoplasm.</text>
</comment>
<comment type="similarity">
    <text evidence="4">Belongs to the glycosyl hydrolase 13 family. GlgB subfamily.</text>
</comment>
<evidence type="ECO:0000250" key="1">
    <source>
        <dbReference type="UniProtKB" id="P32775"/>
    </source>
</evidence>
<evidence type="ECO:0000250" key="2">
    <source>
        <dbReference type="UniProtKB" id="Q04446"/>
    </source>
</evidence>
<evidence type="ECO:0000250" key="3">
    <source>
        <dbReference type="UniProtKB" id="Q6FJV0"/>
    </source>
</evidence>
<evidence type="ECO:0000305" key="4"/>
<feature type="chain" id="PRO_0000188778" description="1,4-alpha-glucan-branching enzyme">
    <location>
        <begin position="1"/>
        <end position="689"/>
    </location>
</feature>
<feature type="active site" description="Nucleophile" evidence="2">
    <location>
        <position position="345"/>
    </location>
</feature>
<feature type="active site" description="Proton donor" evidence="2">
    <location>
        <position position="400"/>
    </location>
</feature>
<feature type="binding site" evidence="3">
    <location>
        <position position="93"/>
    </location>
    <ligand>
        <name>(1,4-alpha-D-glucosyl)n</name>
        <dbReference type="ChEBI" id="CHEBI:15444"/>
    </ligand>
</feature>
<feature type="binding site" evidence="3">
    <location>
        <position position="128"/>
    </location>
    <ligand>
        <name>(1,4-alpha-D-glucosyl)n</name>
        <dbReference type="ChEBI" id="CHEBI:15444"/>
    </ligand>
</feature>
<feature type="site" description="Transition state stabilizer" evidence="2">
    <location>
        <position position="469"/>
    </location>
</feature>
<name>GLGB_ASPOR</name>
<sequence length="689" mass="78751">MGTSQAVDSSPPDGTGVIQLDPWLEPFRDALKQRFSFIEGWVKAINETEGGLETFSKGYERFGLNVQSNGDIIYREWAPNAVQAQLVGEFNNWDVTAHPMTKNGFGVWEVTVPAVNGAPAIPHDSKIKISMVIPSGERIYRIPAWIKRVVQDLSVSPTYEAVFWNPPTEKQYKFQYSRPKRPESLRIYEAHVGISSPETKVATYKEFTSNMLPRIKYLGYNAIQLMAIMEHAYYASFGYQVNNFFAASSRYGTPEDLKELVDKAHSMGLVVLLDVVHSHASKNVLDGLNMFDGTDHLYFHGGGKGRHELWDSRLFNYGHHEVLRFLLSNLRFWMEEYGFDGFRFDGVTSMLYTHHGIGTGFSGGYHEYFGSSVDEEGVMYLTLANEMLHNLYPNCITVAEDVSGMPALCLPHSLGGVGFDYRLAMAVPDMYIKLLKEKKDDEWDIGNLSFTLTNRRHGEKTIAYAESHDQALVGDKTLMMWLCDKEMYTHMSVLTEFTPIIERGMALHKLIRLVTHGLGGEGYLNFEGNEFGHPEWLDFPRDGNNNSFWYARRQLNLTEDHLLRYKFLNDFDRAMQLTEEKYGWLHSPQAYVSLKNETDKVLVFERAGLLWIFNFHPTNSFTDYRVGVEQSGTYRIVLDTDDPAFGGLNRNLKETRFFTTDLSWNGRSNFLQVYIPTRTALVLALEETL</sequence>
<accession>Q96VA4</accession>
<accession>Q2TWN9</accession>
<proteinExistence type="evidence at transcript level"/>
<dbReference type="EC" id="2.4.1.18" evidence="2"/>
<dbReference type="EMBL" id="AB072730">
    <property type="protein sequence ID" value="BAB69770.1"/>
    <property type="molecule type" value="mRNA"/>
</dbReference>
<dbReference type="EMBL" id="BA000056">
    <property type="protein sequence ID" value="BAE66334.1"/>
    <property type="molecule type" value="Genomic_DNA"/>
</dbReference>
<dbReference type="RefSeq" id="XP_001827467.1">
    <property type="nucleotide sequence ID" value="XM_001827415.2"/>
</dbReference>
<dbReference type="SMR" id="Q96VA4"/>
<dbReference type="STRING" id="510516.Q96VA4"/>
<dbReference type="CAZy" id="CBM48">
    <property type="family name" value="Carbohydrate-Binding Module Family 48"/>
</dbReference>
<dbReference type="CAZy" id="GH13">
    <property type="family name" value="Glycoside Hydrolase Family 13"/>
</dbReference>
<dbReference type="EnsemblFungi" id="BAE66334">
    <property type="protein sequence ID" value="BAE66334"/>
    <property type="gene ID" value="AO090010000483"/>
</dbReference>
<dbReference type="GeneID" id="5999601"/>
<dbReference type="KEGG" id="aor:AO090010000483"/>
<dbReference type="VEuPathDB" id="FungiDB:AO090010000483"/>
<dbReference type="HOGENOM" id="CLU_011131_2_2_1"/>
<dbReference type="OMA" id="YEMHLGS"/>
<dbReference type="OrthoDB" id="38768at5052"/>
<dbReference type="UniPathway" id="UPA00164"/>
<dbReference type="Proteomes" id="UP000006564">
    <property type="component" value="Chromosome 8"/>
</dbReference>
<dbReference type="GO" id="GO:0005737">
    <property type="term" value="C:cytoplasm"/>
    <property type="evidence" value="ECO:0000250"/>
    <property type="project" value="UniProtKB"/>
</dbReference>
<dbReference type="GO" id="GO:0003844">
    <property type="term" value="F:1,4-alpha-glucan branching enzyme activity"/>
    <property type="evidence" value="ECO:0007669"/>
    <property type="project" value="UniProtKB-EC"/>
</dbReference>
<dbReference type="GO" id="GO:0043169">
    <property type="term" value="F:cation binding"/>
    <property type="evidence" value="ECO:0007669"/>
    <property type="project" value="InterPro"/>
</dbReference>
<dbReference type="GO" id="GO:0004553">
    <property type="term" value="F:hydrolase activity, hydrolyzing O-glycosyl compounds"/>
    <property type="evidence" value="ECO:0007669"/>
    <property type="project" value="InterPro"/>
</dbReference>
<dbReference type="GO" id="GO:0005978">
    <property type="term" value="P:glycogen biosynthetic process"/>
    <property type="evidence" value="ECO:0007669"/>
    <property type="project" value="UniProtKB-UniPathway"/>
</dbReference>
<dbReference type="CDD" id="cd11321">
    <property type="entry name" value="AmyAc_bac_euk_BE"/>
    <property type="match status" value="1"/>
</dbReference>
<dbReference type="CDD" id="cd02854">
    <property type="entry name" value="E_set_GBE_euk_N"/>
    <property type="match status" value="1"/>
</dbReference>
<dbReference type="FunFam" id="3.20.20.80:FF:000001">
    <property type="entry name" value="1,4-alpha-glucan branching enzyme"/>
    <property type="match status" value="1"/>
</dbReference>
<dbReference type="FunFam" id="2.60.40.10:FF:000250">
    <property type="entry name" value="1,4-alpha-glucan-branching enzyme, chloroplastic/amyloplastic"/>
    <property type="match status" value="1"/>
</dbReference>
<dbReference type="FunFam" id="2.60.40.1180:FF:000003">
    <property type="entry name" value="1,4-alpha-glucan-branching enzyme, chloroplastic/amyloplastic"/>
    <property type="match status" value="1"/>
</dbReference>
<dbReference type="Gene3D" id="3.20.20.80">
    <property type="entry name" value="Glycosidases"/>
    <property type="match status" value="1"/>
</dbReference>
<dbReference type="Gene3D" id="2.60.40.1180">
    <property type="entry name" value="Golgi alpha-mannosidase II"/>
    <property type="match status" value="1"/>
</dbReference>
<dbReference type="Gene3D" id="2.60.40.10">
    <property type="entry name" value="Immunoglobulins"/>
    <property type="match status" value="1"/>
</dbReference>
<dbReference type="InterPro" id="IPR006048">
    <property type="entry name" value="A-amylase/branching_C"/>
</dbReference>
<dbReference type="InterPro" id="IPR037439">
    <property type="entry name" value="Branching_enzy"/>
</dbReference>
<dbReference type="InterPro" id="IPR006047">
    <property type="entry name" value="Glyco_hydro_13_cat_dom"/>
</dbReference>
<dbReference type="InterPro" id="IPR004193">
    <property type="entry name" value="Glyco_hydro_13_N"/>
</dbReference>
<dbReference type="InterPro" id="IPR013780">
    <property type="entry name" value="Glyco_hydro_b"/>
</dbReference>
<dbReference type="InterPro" id="IPR017853">
    <property type="entry name" value="Glycoside_hydrolase_SF"/>
</dbReference>
<dbReference type="InterPro" id="IPR013783">
    <property type="entry name" value="Ig-like_fold"/>
</dbReference>
<dbReference type="InterPro" id="IPR014756">
    <property type="entry name" value="Ig_E-set"/>
</dbReference>
<dbReference type="PANTHER" id="PTHR43651">
    <property type="entry name" value="1,4-ALPHA-GLUCAN-BRANCHING ENZYME"/>
    <property type="match status" value="1"/>
</dbReference>
<dbReference type="PANTHER" id="PTHR43651:SF3">
    <property type="entry name" value="1,4-ALPHA-GLUCAN-BRANCHING ENZYME"/>
    <property type="match status" value="1"/>
</dbReference>
<dbReference type="Pfam" id="PF00128">
    <property type="entry name" value="Alpha-amylase"/>
    <property type="match status" value="1"/>
</dbReference>
<dbReference type="Pfam" id="PF02806">
    <property type="entry name" value="Alpha-amylase_C"/>
    <property type="match status" value="1"/>
</dbReference>
<dbReference type="Pfam" id="PF02922">
    <property type="entry name" value="CBM_48"/>
    <property type="match status" value="1"/>
</dbReference>
<dbReference type="PIRSF" id="PIRSF000463">
    <property type="entry name" value="GlgB"/>
    <property type="match status" value="1"/>
</dbReference>
<dbReference type="SMART" id="SM00642">
    <property type="entry name" value="Aamy"/>
    <property type="match status" value="1"/>
</dbReference>
<dbReference type="SUPFAM" id="SSF51445">
    <property type="entry name" value="(Trans)glycosidases"/>
    <property type="match status" value="1"/>
</dbReference>
<dbReference type="SUPFAM" id="SSF81296">
    <property type="entry name" value="E set domains"/>
    <property type="match status" value="1"/>
</dbReference>
<dbReference type="SUPFAM" id="SSF51011">
    <property type="entry name" value="Glycosyl hydrolase domain"/>
    <property type="match status" value="1"/>
</dbReference>
<organism>
    <name type="scientific">Aspergillus oryzae (strain ATCC 42149 / RIB 40)</name>
    <name type="common">Yellow koji mold</name>
    <dbReference type="NCBI Taxonomy" id="510516"/>
    <lineage>
        <taxon>Eukaryota</taxon>
        <taxon>Fungi</taxon>
        <taxon>Dikarya</taxon>
        <taxon>Ascomycota</taxon>
        <taxon>Pezizomycotina</taxon>
        <taxon>Eurotiomycetes</taxon>
        <taxon>Eurotiomycetidae</taxon>
        <taxon>Eurotiales</taxon>
        <taxon>Aspergillaceae</taxon>
        <taxon>Aspergillus</taxon>
        <taxon>Aspergillus subgen. Circumdati</taxon>
    </lineage>
</organism>
<keyword id="KW-0963">Cytoplasm</keyword>
<keyword id="KW-0320">Glycogen biosynthesis</keyword>
<keyword id="KW-0328">Glycosyltransferase</keyword>
<keyword id="KW-1185">Reference proteome</keyword>
<keyword id="KW-0808">Transferase</keyword>
<protein>
    <recommendedName>
        <fullName>1,4-alpha-glucan-branching enzyme</fullName>
        <ecNumber evidence="2">2.4.1.18</ecNumber>
    </recommendedName>
    <alternativeName>
        <fullName>Glycogen-branching enzyme</fullName>
    </alternativeName>
</protein>